<proteinExistence type="inferred from homology"/>
<protein>
    <recommendedName>
        <fullName>Endoribonuclease MazF</fullName>
        <ecNumber>3.1.-.-</ecNumber>
    </recommendedName>
    <alternativeName>
        <fullName>Toxin MazF</fullName>
    </alternativeName>
    <alternativeName>
        <fullName>mRNA interferase MazF</fullName>
    </alternativeName>
</protein>
<gene>
    <name type="primary">mazF</name>
    <name type="ordered locus">SAR2156</name>
</gene>
<feature type="chain" id="PRO_0000330696" description="Endoribonuclease MazF">
    <location>
        <begin position="1"/>
        <end position="120"/>
    </location>
</feature>
<reference key="1">
    <citation type="journal article" date="2004" name="Proc. Natl. Acad. Sci. U.S.A.">
        <title>Complete genomes of two clinical Staphylococcus aureus strains: evidence for the rapid evolution of virulence and drug resistance.</title>
        <authorList>
            <person name="Holden M.T.G."/>
            <person name="Feil E.J."/>
            <person name="Lindsay J.A."/>
            <person name="Peacock S.J."/>
            <person name="Day N.P.J."/>
            <person name="Enright M.C."/>
            <person name="Foster T.J."/>
            <person name="Moore C.E."/>
            <person name="Hurst L."/>
            <person name="Atkin R."/>
            <person name="Barron A."/>
            <person name="Bason N."/>
            <person name="Bentley S.D."/>
            <person name="Chillingworth C."/>
            <person name="Chillingworth T."/>
            <person name="Churcher C."/>
            <person name="Clark L."/>
            <person name="Corton C."/>
            <person name="Cronin A."/>
            <person name="Doggett J."/>
            <person name="Dowd L."/>
            <person name="Feltwell T."/>
            <person name="Hance Z."/>
            <person name="Harris B."/>
            <person name="Hauser H."/>
            <person name="Holroyd S."/>
            <person name="Jagels K."/>
            <person name="James K.D."/>
            <person name="Lennard N."/>
            <person name="Line A."/>
            <person name="Mayes R."/>
            <person name="Moule S."/>
            <person name="Mungall K."/>
            <person name="Ormond D."/>
            <person name="Quail M.A."/>
            <person name="Rabbinowitsch E."/>
            <person name="Rutherford K.M."/>
            <person name="Sanders M."/>
            <person name="Sharp S."/>
            <person name="Simmonds M."/>
            <person name="Stevens K."/>
            <person name="Whitehead S."/>
            <person name="Barrell B.G."/>
            <person name="Spratt B.G."/>
            <person name="Parkhill J."/>
        </authorList>
    </citation>
    <scope>NUCLEOTIDE SEQUENCE [LARGE SCALE GENOMIC DNA]</scope>
    <source>
        <strain>MRSA252</strain>
    </source>
</reference>
<comment type="function">
    <text evidence="1">Toxic component of a type II toxin-antitoxin (TA) system. Ribosome-independent, sequence-specific endoribonuclease that cleaves mRNA, thus inhibiting protein synthesis and inducing bacterial stasis. It cuts between the first and nucleotides of 5'-UACAU-3' in single-stranded RNA. Neutralized by coexpression with cognate antitoxin MazE.</text>
</comment>
<comment type="subunit">
    <text evidence="1">Forms a complex with MazE which is no longer active as an endoribonuclease.</text>
</comment>
<comment type="similarity">
    <text evidence="2">Belongs to the PemK/MazF family.</text>
</comment>
<dbReference type="EC" id="3.1.-.-"/>
<dbReference type="EMBL" id="BX571856">
    <property type="protein sequence ID" value="CAG41137.1"/>
    <property type="molecule type" value="Genomic_DNA"/>
</dbReference>
<dbReference type="RefSeq" id="WP_000621176.1">
    <property type="nucleotide sequence ID" value="NC_002952.2"/>
</dbReference>
<dbReference type="SMR" id="Q6GF05"/>
<dbReference type="KEGG" id="sar:SAR2156"/>
<dbReference type="HOGENOM" id="CLU_121823_1_0_9"/>
<dbReference type="Proteomes" id="UP000000596">
    <property type="component" value="Chromosome"/>
</dbReference>
<dbReference type="GO" id="GO:0003677">
    <property type="term" value="F:DNA binding"/>
    <property type="evidence" value="ECO:0007669"/>
    <property type="project" value="InterPro"/>
</dbReference>
<dbReference type="GO" id="GO:0003723">
    <property type="term" value="F:RNA binding"/>
    <property type="evidence" value="ECO:0007669"/>
    <property type="project" value="UniProtKB-KW"/>
</dbReference>
<dbReference type="GO" id="GO:0004521">
    <property type="term" value="F:RNA endonuclease activity"/>
    <property type="evidence" value="ECO:0007669"/>
    <property type="project" value="TreeGrafter"/>
</dbReference>
<dbReference type="GO" id="GO:0006402">
    <property type="term" value="P:mRNA catabolic process"/>
    <property type="evidence" value="ECO:0007669"/>
    <property type="project" value="TreeGrafter"/>
</dbReference>
<dbReference type="GO" id="GO:0016075">
    <property type="term" value="P:rRNA catabolic process"/>
    <property type="evidence" value="ECO:0007669"/>
    <property type="project" value="TreeGrafter"/>
</dbReference>
<dbReference type="Gene3D" id="2.30.30.110">
    <property type="match status" value="1"/>
</dbReference>
<dbReference type="InterPro" id="IPR003477">
    <property type="entry name" value="PemK-like"/>
</dbReference>
<dbReference type="InterPro" id="IPR011067">
    <property type="entry name" value="Plasmid_toxin/cell-grow_inhib"/>
</dbReference>
<dbReference type="PANTHER" id="PTHR33988:SF2">
    <property type="entry name" value="ENDORIBONUCLEASE MAZF"/>
    <property type="match status" value="1"/>
</dbReference>
<dbReference type="PANTHER" id="PTHR33988">
    <property type="entry name" value="ENDORIBONUCLEASE MAZF-RELATED"/>
    <property type="match status" value="1"/>
</dbReference>
<dbReference type="Pfam" id="PF02452">
    <property type="entry name" value="PemK_toxin"/>
    <property type="match status" value="1"/>
</dbReference>
<dbReference type="PIRSF" id="PIRSF033490">
    <property type="entry name" value="MazF"/>
    <property type="match status" value="1"/>
</dbReference>
<dbReference type="SUPFAM" id="SSF50118">
    <property type="entry name" value="Cell growth inhibitor/plasmid maintenance toxic component"/>
    <property type="match status" value="1"/>
</dbReference>
<keyword id="KW-0255">Endonuclease</keyword>
<keyword id="KW-0378">Hydrolase</keyword>
<keyword id="KW-0540">Nuclease</keyword>
<keyword id="KW-0694">RNA-binding</keyword>
<keyword id="KW-1277">Toxin-antitoxin system</keyword>
<name>MAZF_STAAR</name>
<accession>Q6GF05</accession>
<sequence length="120" mass="13470">MIRRGDVYLADLSPVQGSEQGGVRPVVIIQNDTGNKYSPTVIVAAITGRINKAKIPTHVEIEKKKYKLDKDSVILLEQIRTLDKKRLKEKLTYLSDDKMKEVDNALMISLGLNAVVHQKN</sequence>
<evidence type="ECO:0000250" key="1">
    <source>
        <dbReference type="UniProtKB" id="A6QIR4"/>
    </source>
</evidence>
<evidence type="ECO:0000305" key="2"/>
<organism>
    <name type="scientific">Staphylococcus aureus (strain MRSA252)</name>
    <dbReference type="NCBI Taxonomy" id="282458"/>
    <lineage>
        <taxon>Bacteria</taxon>
        <taxon>Bacillati</taxon>
        <taxon>Bacillota</taxon>
        <taxon>Bacilli</taxon>
        <taxon>Bacillales</taxon>
        <taxon>Staphylococcaceae</taxon>
        <taxon>Staphylococcus</taxon>
    </lineage>
</organism>